<proteinExistence type="evidence at protein level"/>
<protein>
    <recommendedName>
        <fullName>NAD kinase</fullName>
        <ecNumber>2.7.1.23</ecNumber>
    </recommendedName>
    <alternativeName>
        <fullName>Poly(P)/ATP NAD kinase</fullName>
    </alternativeName>
</protein>
<feature type="chain" id="PRO_0000120713" description="NAD kinase">
    <location>
        <begin position="1"/>
        <end position="446"/>
    </location>
</feature>
<feature type="modified residue" description="Phosphoserine" evidence="6 7 8">
    <location>
        <position position="46"/>
    </location>
</feature>
<feature type="modified residue" description="Phosphoserine" evidence="6 7 8">
    <location>
        <position position="48"/>
    </location>
</feature>
<feature type="modified residue" description="Phosphoserine" evidence="6 8">
    <location>
        <position position="50"/>
    </location>
</feature>
<feature type="modified residue" description="Phosphoserine" evidence="8">
    <location>
        <position position="55"/>
    </location>
</feature>
<feature type="modified residue" description="Phosphoserine" evidence="6 8 9">
    <location>
        <position position="64"/>
    </location>
</feature>
<feature type="splice variant" id="VSP_047312" description="In isoform 3." evidence="3">
    <original>NKELSPDAAAYCCSACHGDETWSYNHPIRGRAKSRSLSASPALGSTKEFRRTRSLHGPCPVTTFGPKACVLQNPQTI</original>
    <variation>GRPRVRQAWPGCCGHTGRLPAGRGYLASHMCDPAGAELIGDGMSDPTPPSNACT</variation>
    <location>
        <begin position="11"/>
        <end position="87"/>
    </location>
</feature>
<feature type="splice variant" id="VSP_047313" description="In isoform 2." evidence="4">
    <original>M</original>
    <variation>IATPLSLASQLLPSPAVSHSGQGGVTGQVHVLPQPSDQGVLSGPRAARGQTAPQEEAVTQEEVEALVCGHTQRWVPGPVYDAAAGGSGWAQLSLRAGMGVGQATG</variation>
    <location>
        <position position="88"/>
    </location>
</feature>
<feature type="splice variant" id="VSP_047314" description="In isoform 2." evidence="4">
    <original>E</original>
    <variation>EARGAGGKGAWGAHGVGGASIHITAPRVGSAGGMSRLALCFQ</variation>
    <location>
        <position position="131"/>
    </location>
</feature>
<feature type="sequence variant" id="VAR_034119" description="In dbSNP:rs4751." evidence="1 2">
    <original>N</original>
    <variation>K</variation>
    <location>
        <position position="262"/>
    </location>
</feature>
<feature type="sequence conflict" description="In Ref. 2; AAG44568." evidence="5" ref="2">
    <location>
        <position position="363"/>
    </location>
</feature>
<feature type="sequence conflict" description="In Ref. 2; BAB14412." evidence="5" ref="2">
    <original>E</original>
    <variation>EE</variation>
    <location>
        <position position="445"/>
    </location>
</feature>
<feature type="sequence conflict" description="In Ref. 3; BAH12420." evidence="5" ref="3">
    <original>G</original>
    <variation>EG</variation>
    <location>
        <position position="446"/>
    </location>
</feature>
<feature type="turn" evidence="10">
    <location>
        <begin position="75"/>
        <end position="77"/>
    </location>
</feature>
<feature type="strand" evidence="10">
    <location>
        <begin position="78"/>
        <end position="80"/>
    </location>
</feature>
<feature type="turn" evidence="10">
    <location>
        <begin position="84"/>
        <end position="86"/>
    </location>
</feature>
<feature type="strand" evidence="10">
    <location>
        <begin position="87"/>
        <end position="91"/>
    </location>
</feature>
<feature type="turn" evidence="10">
    <location>
        <begin position="93"/>
        <end position="95"/>
    </location>
</feature>
<feature type="strand" evidence="10">
    <location>
        <begin position="97"/>
        <end position="102"/>
    </location>
</feature>
<feature type="strand" evidence="10">
    <location>
        <begin position="106"/>
        <end position="111"/>
    </location>
</feature>
<feature type="helix" evidence="10">
    <location>
        <begin position="116"/>
        <end position="118"/>
    </location>
</feature>
<feature type="helix" evidence="10">
    <location>
        <begin position="119"/>
        <end position="131"/>
    </location>
</feature>
<feature type="strand" evidence="10">
    <location>
        <begin position="135"/>
        <end position="139"/>
    </location>
</feature>
<feature type="helix" evidence="10">
    <location>
        <begin position="140"/>
        <end position="144"/>
    </location>
</feature>
<feature type="helix" evidence="10">
    <location>
        <begin position="146"/>
        <end position="150"/>
    </location>
</feature>
<feature type="helix" evidence="10">
    <location>
        <begin position="155"/>
        <end position="160"/>
    </location>
</feature>
<feature type="strand" evidence="10">
    <location>
        <begin position="162"/>
        <end position="164"/>
    </location>
</feature>
<feature type="turn" evidence="10">
    <location>
        <begin position="166"/>
        <end position="168"/>
    </location>
</feature>
<feature type="turn" evidence="10">
    <location>
        <begin position="172"/>
        <end position="174"/>
    </location>
</feature>
<feature type="strand" evidence="10">
    <location>
        <begin position="176"/>
        <end position="183"/>
    </location>
</feature>
<feature type="helix" evidence="10">
    <location>
        <begin position="186"/>
        <end position="193"/>
    </location>
</feature>
<feature type="strand" evidence="10">
    <location>
        <begin position="195"/>
        <end position="197"/>
    </location>
</feature>
<feature type="strand" evidence="10">
    <location>
        <begin position="201"/>
        <end position="208"/>
    </location>
</feature>
<feature type="turn" evidence="10">
    <location>
        <begin position="210"/>
        <end position="212"/>
    </location>
</feature>
<feature type="strand" evidence="10">
    <location>
        <begin position="215"/>
        <end position="217"/>
    </location>
</feature>
<feature type="helix" evidence="10">
    <location>
        <begin position="220"/>
        <end position="229"/>
    </location>
</feature>
<feature type="strand" evidence="10">
    <location>
        <begin position="233"/>
        <end position="237"/>
    </location>
</feature>
<feature type="strand" evidence="10">
    <location>
        <begin position="240"/>
        <end position="245"/>
    </location>
</feature>
<feature type="strand" evidence="10">
    <location>
        <begin position="277"/>
        <end position="289"/>
    </location>
</feature>
<feature type="strand" evidence="10">
    <location>
        <begin position="299"/>
        <end position="303"/>
    </location>
</feature>
<feature type="strand" evidence="10">
    <location>
        <begin position="306"/>
        <end position="311"/>
    </location>
</feature>
<feature type="strand" evidence="10">
    <location>
        <begin position="313"/>
        <end position="319"/>
    </location>
</feature>
<feature type="helix" evidence="10">
    <location>
        <begin position="321"/>
        <end position="325"/>
    </location>
</feature>
<feature type="helix" evidence="10">
    <location>
        <begin position="327"/>
        <end position="330"/>
    </location>
</feature>
<feature type="strand" evidence="10">
    <location>
        <begin position="343"/>
        <end position="349"/>
    </location>
</feature>
<feature type="strand" evidence="10">
    <location>
        <begin position="358"/>
        <end position="360"/>
    </location>
</feature>
<feature type="strand" evidence="10">
    <location>
        <begin position="366"/>
        <end position="370"/>
    </location>
</feature>
<feature type="strand" evidence="10">
    <location>
        <begin position="378"/>
        <end position="382"/>
    </location>
</feature>
<feature type="strand" evidence="10">
    <location>
        <begin position="385"/>
        <end position="390"/>
    </location>
</feature>
<feature type="strand" evidence="10">
    <location>
        <begin position="395"/>
        <end position="400"/>
    </location>
</feature>
<feature type="strand" evidence="10">
    <location>
        <begin position="405"/>
        <end position="408"/>
    </location>
</feature>
<feature type="helix" evidence="10">
    <location>
        <begin position="413"/>
        <end position="424"/>
    </location>
</feature>
<evidence type="ECO:0000269" key="1">
    <source>
    </source>
</evidence>
<evidence type="ECO:0000269" key="2">
    <source>
    </source>
</evidence>
<evidence type="ECO:0000303" key="3">
    <source>
    </source>
</evidence>
<evidence type="ECO:0000303" key="4">
    <source ref="2"/>
</evidence>
<evidence type="ECO:0000305" key="5"/>
<evidence type="ECO:0007744" key="6">
    <source>
    </source>
</evidence>
<evidence type="ECO:0007744" key="7">
    <source>
    </source>
</evidence>
<evidence type="ECO:0007744" key="8">
    <source>
    </source>
</evidence>
<evidence type="ECO:0007744" key="9">
    <source>
    </source>
</evidence>
<evidence type="ECO:0007829" key="10">
    <source>
        <dbReference type="PDB" id="3PFN"/>
    </source>
</evidence>
<accession>O95544</accession>
<accession>A6NNN3</accession>
<accession>A8K296</accession>
<accession>B7Z434</accession>
<accession>F5GXR5</accession>
<accession>Q5QPS4</accession>
<accession>Q9H2P2</accession>
<accession>Q9H931</accession>
<gene>
    <name type="primary">NADK</name>
</gene>
<sequence>MEMEQEKMTMNKELSPDAAAYCCSACHGDETWSYNHPIRGRAKSRSLSASPALGSTKEFRRTRSLHGPCPVTTFGPKACVLQNPQTIMHIQDPASQRLTWNKSPKSVLVIKKMRDASLLQPFKELCTHLMEENMIVYVEKKVLEDPAIASDESFGAVKKKFCTFREDYDDISNQIDFIICLGGDGTLLYASSLFQGSVPPVMAFHLGSLGFLTPFSFENFQSQVTQVIEGNAAVVLRSRLKVRVVKELRGKKTAVHNGLGENGSQAAGLDMDVGKQAMQYQVLNEVVIDRGPSSYLSNVDVYLDGHLITTVQGDGVIVSTPTGSTAYAAAAGASMIHPNVPAIMITPICPHSLSFRPIVVPAGVELKIMLSPEARNTAWVSFDGRKRQEIRHGDSISITTSCYPLPSICVRDPVSDWFESLAQCLHWNVRKKQAHFEEEEEEEEEG</sequence>
<comment type="catalytic activity">
    <reaction evidence="1">
        <text>NAD(+) + ATP = ADP + NADP(+) + H(+)</text>
        <dbReference type="Rhea" id="RHEA:18629"/>
        <dbReference type="ChEBI" id="CHEBI:15378"/>
        <dbReference type="ChEBI" id="CHEBI:30616"/>
        <dbReference type="ChEBI" id="CHEBI:57540"/>
        <dbReference type="ChEBI" id="CHEBI:58349"/>
        <dbReference type="ChEBI" id="CHEBI:456216"/>
        <dbReference type="EC" id="2.7.1.23"/>
    </reaction>
</comment>
<comment type="cofactor">
    <cofactor evidence="1">
        <name>a divalent metal cation</name>
        <dbReference type="ChEBI" id="CHEBI:60240"/>
    </cofactor>
</comment>
<comment type="biophysicochemical properties">
    <kinetics>
        <KM evidence="1">3.3 mM for ATP</KM>
        <KM evidence="1">0.54 mM for NAD</KM>
        <Vmax evidence="1">6.7 umol/min/mg enzyme</Vmax>
    </kinetics>
    <phDependence>
        <text evidence="1">Optimum pH is 7.5.</text>
    </phDependence>
    <temperatureDependence>
        <text evidence="1">Optimum temperature is 55 degrees Celsius.</text>
    </temperatureDependence>
</comment>
<comment type="interaction">
    <interactant intactId="EBI-743949">
        <id>O95544</id>
    </interactant>
    <interactant intactId="EBI-2212355">
        <id>Q49AN0</id>
        <label>CRY2</label>
    </interactant>
    <organismsDiffer>false</organismsDiffer>
    <experiments>3</experiments>
</comment>
<comment type="interaction">
    <interactant intactId="EBI-743949">
        <id>O95544</id>
    </interactant>
    <interactant intactId="EBI-11986315">
        <id>Q9H5Z6-2</id>
        <label>FAM124B</label>
    </interactant>
    <organismsDiffer>false</organismsDiffer>
    <experiments>3</experiments>
</comment>
<comment type="interaction">
    <interactant intactId="EBI-743949">
        <id>O95544</id>
    </interactant>
    <interactant intactId="EBI-739832">
        <id>Q8TBB1</id>
        <label>LNX1</label>
    </interactant>
    <organismsDiffer>false</organismsDiffer>
    <experiments>5</experiments>
</comment>
<comment type="interaction">
    <interactant intactId="EBI-743949">
        <id>O95544</id>
    </interactant>
    <interactant intactId="EBI-727004">
        <id>O00560</id>
        <label>SDCBP</label>
    </interactant>
    <organismsDiffer>false</organismsDiffer>
    <experiments>7</experiments>
</comment>
<comment type="interaction">
    <interactant intactId="EBI-743949">
        <id>O95544</id>
    </interactant>
    <interactant intactId="EBI-347088">
        <id>P63104</id>
        <label>YWHAZ</label>
    </interactant>
    <organismsDiffer>false</organismsDiffer>
    <experiments>3</experiments>
</comment>
<comment type="alternative products">
    <event type="alternative splicing"/>
    <isoform>
        <id>O95544-1</id>
        <name>1</name>
        <sequence type="displayed"/>
    </isoform>
    <isoform>
        <id>O95544-2</id>
        <name>2</name>
        <sequence type="described" ref="VSP_047313 VSP_047314"/>
    </isoform>
    <isoform>
        <id>O95544-3</id>
        <name>3</name>
        <sequence type="described" ref="VSP_047312"/>
    </isoform>
</comment>
<comment type="tissue specificity">
    <text evidence="1">Widely expressed but not detected in skeletal muscle.</text>
</comment>
<comment type="similarity">
    <text evidence="5">Belongs to the NAD kinase family.</text>
</comment>
<name>NADK_HUMAN</name>
<keyword id="KW-0002">3D-structure</keyword>
<keyword id="KW-0025">Alternative splicing</keyword>
<keyword id="KW-0067">ATP-binding</keyword>
<keyword id="KW-0418">Kinase</keyword>
<keyword id="KW-0479">Metal-binding</keyword>
<keyword id="KW-0520">NAD</keyword>
<keyword id="KW-0521">NADP</keyword>
<keyword id="KW-0547">Nucleotide-binding</keyword>
<keyword id="KW-0597">Phosphoprotein</keyword>
<keyword id="KW-1267">Proteomics identification</keyword>
<keyword id="KW-1185">Reference proteome</keyword>
<keyword id="KW-0808">Transferase</keyword>
<organism>
    <name type="scientific">Homo sapiens</name>
    <name type="common">Human</name>
    <dbReference type="NCBI Taxonomy" id="9606"/>
    <lineage>
        <taxon>Eukaryota</taxon>
        <taxon>Metazoa</taxon>
        <taxon>Chordata</taxon>
        <taxon>Craniata</taxon>
        <taxon>Vertebrata</taxon>
        <taxon>Euteleostomi</taxon>
        <taxon>Mammalia</taxon>
        <taxon>Eutheria</taxon>
        <taxon>Euarchontoglires</taxon>
        <taxon>Primates</taxon>
        <taxon>Haplorrhini</taxon>
        <taxon>Catarrhini</taxon>
        <taxon>Hominidae</taxon>
        <taxon>Homo</taxon>
    </lineage>
</organism>
<reference key="1">
    <citation type="journal article" date="2001" name="Biochem. Biophys. Res. Commun.">
        <title>Structural and functional characterization of human NAD kinase.</title>
        <authorList>
            <person name="Lerner F."/>
            <person name="Niere M."/>
            <person name="Ludwig A."/>
            <person name="Ziegler M."/>
        </authorList>
    </citation>
    <scope>NUCLEOTIDE SEQUENCE [MRNA] (ISOFORM 1)</scope>
    <scope>CATALYTIC ACTIVITY</scope>
    <scope>COFACTOR</scope>
    <scope>BIOPHYSICOCHEMICAL PROPERTIES</scope>
    <scope>TISSUE SPECIFICITY</scope>
    <scope>VARIANT LYS-262</scope>
    <source>
        <tissue>Fibroblast</tissue>
    </source>
</reference>
<reference key="2">
    <citation type="submission" date="2000-03" db="EMBL/GenBank/DDBJ databases">
        <authorList>
            <person name="Xu X."/>
            <person name="Yang Y."/>
            <person name="Gao G."/>
            <person name="Xiao H."/>
            <person name="Chen Z."/>
            <person name="Han Z."/>
        </authorList>
    </citation>
    <scope>NUCLEOTIDE SEQUENCE [MRNA] (ISOFORM 2)</scope>
    <source>
        <tissue>Hypothalamus</tissue>
    </source>
</reference>
<reference key="3">
    <citation type="journal article" date="2004" name="Nat. Genet.">
        <title>Complete sequencing and characterization of 21,243 full-length human cDNAs.</title>
        <authorList>
            <person name="Ota T."/>
            <person name="Suzuki Y."/>
            <person name="Nishikawa T."/>
            <person name="Otsuki T."/>
            <person name="Sugiyama T."/>
            <person name="Irie R."/>
            <person name="Wakamatsu A."/>
            <person name="Hayashi K."/>
            <person name="Sato H."/>
            <person name="Nagai K."/>
            <person name="Kimura K."/>
            <person name="Makita H."/>
            <person name="Sekine M."/>
            <person name="Obayashi M."/>
            <person name="Nishi T."/>
            <person name="Shibahara T."/>
            <person name="Tanaka T."/>
            <person name="Ishii S."/>
            <person name="Yamamoto J."/>
            <person name="Saito K."/>
            <person name="Kawai Y."/>
            <person name="Isono Y."/>
            <person name="Nakamura Y."/>
            <person name="Nagahari K."/>
            <person name="Murakami K."/>
            <person name="Yasuda T."/>
            <person name="Iwayanagi T."/>
            <person name="Wagatsuma M."/>
            <person name="Shiratori A."/>
            <person name="Sudo H."/>
            <person name="Hosoiri T."/>
            <person name="Kaku Y."/>
            <person name="Kodaira H."/>
            <person name="Kondo H."/>
            <person name="Sugawara M."/>
            <person name="Takahashi M."/>
            <person name="Kanda K."/>
            <person name="Yokoi T."/>
            <person name="Furuya T."/>
            <person name="Kikkawa E."/>
            <person name="Omura Y."/>
            <person name="Abe K."/>
            <person name="Kamihara K."/>
            <person name="Katsuta N."/>
            <person name="Sato K."/>
            <person name="Tanikawa M."/>
            <person name="Yamazaki M."/>
            <person name="Ninomiya K."/>
            <person name="Ishibashi T."/>
            <person name="Yamashita H."/>
            <person name="Murakawa K."/>
            <person name="Fujimori K."/>
            <person name="Tanai H."/>
            <person name="Kimata M."/>
            <person name="Watanabe M."/>
            <person name="Hiraoka S."/>
            <person name="Chiba Y."/>
            <person name="Ishida S."/>
            <person name="Ono Y."/>
            <person name="Takiguchi S."/>
            <person name="Watanabe S."/>
            <person name="Yosida M."/>
            <person name="Hotuta T."/>
            <person name="Kusano J."/>
            <person name="Kanehori K."/>
            <person name="Takahashi-Fujii A."/>
            <person name="Hara H."/>
            <person name="Tanase T.-O."/>
            <person name="Nomura Y."/>
            <person name="Togiya S."/>
            <person name="Komai F."/>
            <person name="Hara R."/>
            <person name="Takeuchi K."/>
            <person name="Arita M."/>
            <person name="Imose N."/>
            <person name="Musashino K."/>
            <person name="Yuuki H."/>
            <person name="Oshima A."/>
            <person name="Sasaki N."/>
            <person name="Aotsuka S."/>
            <person name="Yoshikawa Y."/>
            <person name="Matsunawa H."/>
            <person name="Ichihara T."/>
            <person name="Shiohata N."/>
            <person name="Sano S."/>
            <person name="Moriya S."/>
            <person name="Momiyama H."/>
            <person name="Satoh N."/>
            <person name="Takami S."/>
            <person name="Terashima Y."/>
            <person name="Suzuki O."/>
            <person name="Nakagawa S."/>
            <person name="Senoh A."/>
            <person name="Mizoguchi H."/>
            <person name="Goto Y."/>
            <person name="Shimizu F."/>
            <person name="Wakebe H."/>
            <person name="Hishigaki H."/>
            <person name="Watanabe T."/>
            <person name="Sugiyama A."/>
            <person name="Takemoto M."/>
            <person name="Kawakami B."/>
            <person name="Yamazaki M."/>
            <person name="Watanabe K."/>
            <person name="Kumagai A."/>
            <person name="Itakura S."/>
            <person name="Fukuzumi Y."/>
            <person name="Fujimori Y."/>
            <person name="Komiyama M."/>
            <person name="Tashiro H."/>
            <person name="Tanigami A."/>
            <person name="Fujiwara T."/>
            <person name="Ono T."/>
            <person name="Yamada K."/>
            <person name="Fujii Y."/>
            <person name="Ozaki K."/>
            <person name="Hirao M."/>
            <person name="Ohmori Y."/>
            <person name="Kawabata A."/>
            <person name="Hikiji T."/>
            <person name="Kobatake N."/>
            <person name="Inagaki H."/>
            <person name="Ikema Y."/>
            <person name="Okamoto S."/>
            <person name="Okitani R."/>
            <person name="Kawakami T."/>
            <person name="Noguchi S."/>
            <person name="Itoh T."/>
            <person name="Shigeta K."/>
            <person name="Senba T."/>
            <person name="Matsumura K."/>
            <person name="Nakajima Y."/>
            <person name="Mizuno T."/>
            <person name="Morinaga M."/>
            <person name="Sasaki M."/>
            <person name="Togashi T."/>
            <person name="Oyama M."/>
            <person name="Hata H."/>
            <person name="Watanabe M."/>
            <person name="Komatsu T."/>
            <person name="Mizushima-Sugano J."/>
            <person name="Satoh T."/>
            <person name="Shirai Y."/>
            <person name="Takahashi Y."/>
            <person name="Nakagawa K."/>
            <person name="Okumura K."/>
            <person name="Nagase T."/>
            <person name="Nomura N."/>
            <person name="Kikuchi H."/>
            <person name="Masuho Y."/>
            <person name="Yamashita R."/>
            <person name="Nakai K."/>
            <person name="Yada T."/>
            <person name="Nakamura Y."/>
            <person name="Ohara O."/>
            <person name="Isogai T."/>
            <person name="Sugano S."/>
        </authorList>
    </citation>
    <scope>NUCLEOTIDE SEQUENCE [LARGE SCALE MRNA] (ISOFORMS 1 AND 3)</scope>
    <source>
        <tissue>Thalamus</tissue>
    </source>
</reference>
<reference key="4">
    <citation type="journal article" date="2006" name="Nature">
        <title>The DNA sequence and biological annotation of human chromosome 1.</title>
        <authorList>
            <person name="Gregory S.G."/>
            <person name="Barlow K.F."/>
            <person name="McLay K.E."/>
            <person name="Kaul R."/>
            <person name="Swarbreck D."/>
            <person name="Dunham A."/>
            <person name="Scott C.E."/>
            <person name="Howe K.L."/>
            <person name="Woodfine K."/>
            <person name="Spencer C.C.A."/>
            <person name="Jones M.C."/>
            <person name="Gillson C."/>
            <person name="Searle S."/>
            <person name="Zhou Y."/>
            <person name="Kokocinski F."/>
            <person name="McDonald L."/>
            <person name="Evans R."/>
            <person name="Phillips K."/>
            <person name="Atkinson A."/>
            <person name="Cooper R."/>
            <person name="Jones C."/>
            <person name="Hall R.E."/>
            <person name="Andrews T.D."/>
            <person name="Lloyd C."/>
            <person name="Ainscough R."/>
            <person name="Almeida J.P."/>
            <person name="Ambrose K.D."/>
            <person name="Anderson F."/>
            <person name="Andrew R.W."/>
            <person name="Ashwell R.I.S."/>
            <person name="Aubin K."/>
            <person name="Babbage A.K."/>
            <person name="Bagguley C.L."/>
            <person name="Bailey J."/>
            <person name="Beasley H."/>
            <person name="Bethel G."/>
            <person name="Bird C.P."/>
            <person name="Bray-Allen S."/>
            <person name="Brown J.Y."/>
            <person name="Brown A.J."/>
            <person name="Buckley D."/>
            <person name="Burton J."/>
            <person name="Bye J."/>
            <person name="Carder C."/>
            <person name="Chapman J.C."/>
            <person name="Clark S.Y."/>
            <person name="Clarke G."/>
            <person name="Clee C."/>
            <person name="Cobley V."/>
            <person name="Collier R.E."/>
            <person name="Corby N."/>
            <person name="Coville G.J."/>
            <person name="Davies J."/>
            <person name="Deadman R."/>
            <person name="Dunn M."/>
            <person name="Earthrowl M."/>
            <person name="Ellington A.G."/>
            <person name="Errington H."/>
            <person name="Frankish A."/>
            <person name="Frankland J."/>
            <person name="French L."/>
            <person name="Garner P."/>
            <person name="Garnett J."/>
            <person name="Gay L."/>
            <person name="Ghori M.R.J."/>
            <person name="Gibson R."/>
            <person name="Gilby L.M."/>
            <person name="Gillett W."/>
            <person name="Glithero R.J."/>
            <person name="Grafham D.V."/>
            <person name="Griffiths C."/>
            <person name="Griffiths-Jones S."/>
            <person name="Grocock R."/>
            <person name="Hammond S."/>
            <person name="Harrison E.S.I."/>
            <person name="Hart E."/>
            <person name="Haugen E."/>
            <person name="Heath P.D."/>
            <person name="Holmes S."/>
            <person name="Holt K."/>
            <person name="Howden P.J."/>
            <person name="Hunt A.R."/>
            <person name="Hunt S.E."/>
            <person name="Hunter G."/>
            <person name="Isherwood J."/>
            <person name="James R."/>
            <person name="Johnson C."/>
            <person name="Johnson D."/>
            <person name="Joy A."/>
            <person name="Kay M."/>
            <person name="Kershaw J.K."/>
            <person name="Kibukawa M."/>
            <person name="Kimberley A.M."/>
            <person name="King A."/>
            <person name="Knights A.J."/>
            <person name="Lad H."/>
            <person name="Laird G."/>
            <person name="Lawlor S."/>
            <person name="Leongamornlert D.A."/>
            <person name="Lloyd D.M."/>
            <person name="Loveland J."/>
            <person name="Lovell J."/>
            <person name="Lush M.J."/>
            <person name="Lyne R."/>
            <person name="Martin S."/>
            <person name="Mashreghi-Mohammadi M."/>
            <person name="Matthews L."/>
            <person name="Matthews N.S.W."/>
            <person name="McLaren S."/>
            <person name="Milne S."/>
            <person name="Mistry S."/>
            <person name="Moore M.J.F."/>
            <person name="Nickerson T."/>
            <person name="O'Dell C.N."/>
            <person name="Oliver K."/>
            <person name="Palmeiri A."/>
            <person name="Palmer S.A."/>
            <person name="Parker A."/>
            <person name="Patel D."/>
            <person name="Pearce A.V."/>
            <person name="Peck A.I."/>
            <person name="Pelan S."/>
            <person name="Phelps K."/>
            <person name="Phillimore B.J."/>
            <person name="Plumb R."/>
            <person name="Rajan J."/>
            <person name="Raymond C."/>
            <person name="Rouse G."/>
            <person name="Saenphimmachak C."/>
            <person name="Sehra H.K."/>
            <person name="Sheridan E."/>
            <person name="Shownkeen R."/>
            <person name="Sims S."/>
            <person name="Skuce C.D."/>
            <person name="Smith M."/>
            <person name="Steward C."/>
            <person name="Subramanian S."/>
            <person name="Sycamore N."/>
            <person name="Tracey A."/>
            <person name="Tromans A."/>
            <person name="Van Helmond Z."/>
            <person name="Wall M."/>
            <person name="Wallis J.M."/>
            <person name="White S."/>
            <person name="Whitehead S.L."/>
            <person name="Wilkinson J.E."/>
            <person name="Willey D.L."/>
            <person name="Williams H."/>
            <person name="Wilming L."/>
            <person name="Wray P.W."/>
            <person name="Wu Z."/>
            <person name="Coulson A."/>
            <person name="Vaudin M."/>
            <person name="Sulston J.E."/>
            <person name="Durbin R.M."/>
            <person name="Hubbard T."/>
            <person name="Wooster R."/>
            <person name="Dunham I."/>
            <person name="Carter N.P."/>
            <person name="McVean G."/>
            <person name="Ross M.T."/>
            <person name="Harrow J."/>
            <person name="Olson M.V."/>
            <person name="Beck S."/>
            <person name="Rogers J."/>
            <person name="Bentley D.R."/>
        </authorList>
    </citation>
    <scope>NUCLEOTIDE SEQUENCE [LARGE SCALE GENOMIC DNA]</scope>
</reference>
<reference key="5">
    <citation type="submission" date="2005-07" db="EMBL/GenBank/DDBJ databases">
        <authorList>
            <person name="Mural R.J."/>
            <person name="Istrail S."/>
            <person name="Sutton G.G."/>
            <person name="Florea L."/>
            <person name="Halpern A.L."/>
            <person name="Mobarry C.M."/>
            <person name="Lippert R."/>
            <person name="Walenz B."/>
            <person name="Shatkay H."/>
            <person name="Dew I."/>
            <person name="Miller J.R."/>
            <person name="Flanigan M.J."/>
            <person name="Edwards N.J."/>
            <person name="Bolanos R."/>
            <person name="Fasulo D."/>
            <person name="Halldorsson B.V."/>
            <person name="Hannenhalli S."/>
            <person name="Turner R."/>
            <person name="Yooseph S."/>
            <person name="Lu F."/>
            <person name="Nusskern D.R."/>
            <person name="Shue B.C."/>
            <person name="Zheng X.H."/>
            <person name="Zhong F."/>
            <person name="Delcher A.L."/>
            <person name="Huson D.H."/>
            <person name="Kravitz S.A."/>
            <person name="Mouchard L."/>
            <person name="Reinert K."/>
            <person name="Remington K.A."/>
            <person name="Clark A.G."/>
            <person name="Waterman M.S."/>
            <person name="Eichler E.E."/>
            <person name="Adams M.D."/>
            <person name="Hunkapiller M.W."/>
            <person name="Myers E.W."/>
            <person name="Venter J.C."/>
        </authorList>
    </citation>
    <scope>NUCLEOTIDE SEQUENCE [LARGE SCALE GENOMIC DNA]</scope>
</reference>
<reference key="6">
    <citation type="journal article" date="2004" name="Genome Res.">
        <title>The status, quality, and expansion of the NIH full-length cDNA project: the Mammalian Gene Collection (MGC).</title>
        <authorList>
            <consortium name="The MGC Project Team"/>
        </authorList>
    </citation>
    <scope>NUCLEOTIDE SEQUENCE [LARGE SCALE MRNA] (ISOFORM 1)</scope>
    <scope>VARIANT LYS-262</scope>
    <source>
        <tissue>Lymph</tissue>
    </source>
</reference>
<reference key="7">
    <citation type="journal article" date="2008" name="Proc. Natl. Acad. Sci. U.S.A.">
        <title>A quantitative atlas of mitotic phosphorylation.</title>
        <authorList>
            <person name="Dephoure N."/>
            <person name="Zhou C."/>
            <person name="Villen J."/>
            <person name="Beausoleil S.A."/>
            <person name="Bakalarski C.E."/>
            <person name="Elledge S.J."/>
            <person name="Gygi S.P."/>
        </authorList>
    </citation>
    <scope>PHOSPHORYLATION [LARGE SCALE ANALYSIS] AT SER-46; SER-48; SER-50 AND SER-64</scope>
    <scope>IDENTIFICATION BY MASS SPECTROMETRY [LARGE SCALE ANALYSIS]</scope>
    <source>
        <tissue>Cervix carcinoma</tissue>
    </source>
</reference>
<reference key="8">
    <citation type="journal article" date="2009" name="Sci. Signal.">
        <title>Quantitative phosphoproteomic analysis of T cell receptor signaling reveals system-wide modulation of protein-protein interactions.</title>
        <authorList>
            <person name="Mayya V."/>
            <person name="Lundgren D.H."/>
            <person name="Hwang S.-I."/>
            <person name="Rezaul K."/>
            <person name="Wu L."/>
            <person name="Eng J.K."/>
            <person name="Rodionov V."/>
            <person name="Han D.K."/>
        </authorList>
    </citation>
    <scope>PHOSPHORYLATION [LARGE SCALE ANALYSIS] AT SER-46 AND SER-48</scope>
    <scope>IDENTIFICATION BY MASS SPECTROMETRY [LARGE SCALE ANALYSIS]</scope>
    <source>
        <tissue>Leukemic T-cell</tissue>
    </source>
</reference>
<reference key="9">
    <citation type="journal article" date="2011" name="Sci. Signal.">
        <title>System-wide temporal characterization of the proteome and phosphoproteome of human embryonic stem cell differentiation.</title>
        <authorList>
            <person name="Rigbolt K.T."/>
            <person name="Prokhorova T.A."/>
            <person name="Akimov V."/>
            <person name="Henningsen J."/>
            <person name="Johansen P.T."/>
            <person name="Kratchmarova I."/>
            <person name="Kassem M."/>
            <person name="Mann M."/>
            <person name="Olsen J.V."/>
            <person name="Blagoev B."/>
        </authorList>
    </citation>
    <scope>IDENTIFICATION BY MASS SPECTROMETRY [LARGE SCALE ANALYSIS]</scope>
</reference>
<reference key="10">
    <citation type="journal article" date="2013" name="J. Proteome Res.">
        <title>Toward a comprehensive characterization of a human cancer cell phosphoproteome.</title>
        <authorList>
            <person name="Zhou H."/>
            <person name="Di Palma S."/>
            <person name="Preisinger C."/>
            <person name="Peng M."/>
            <person name="Polat A.N."/>
            <person name="Heck A.J."/>
            <person name="Mohammed S."/>
        </authorList>
    </citation>
    <scope>PHOSPHORYLATION [LARGE SCALE ANALYSIS] AT SER-46; SER-48; SER-50; SER-55 AND SER-64</scope>
    <scope>IDENTIFICATION BY MASS SPECTROMETRY [LARGE SCALE ANALYSIS]</scope>
    <source>
        <tissue>Cervix carcinoma</tissue>
        <tissue>Erythroleukemia</tissue>
    </source>
</reference>
<reference key="11">
    <citation type="journal article" date="2014" name="J. Proteomics">
        <title>An enzyme assisted RP-RPLC approach for in-depth analysis of human liver phosphoproteome.</title>
        <authorList>
            <person name="Bian Y."/>
            <person name="Song C."/>
            <person name="Cheng K."/>
            <person name="Dong M."/>
            <person name="Wang F."/>
            <person name="Huang J."/>
            <person name="Sun D."/>
            <person name="Wang L."/>
            <person name="Ye M."/>
            <person name="Zou H."/>
        </authorList>
    </citation>
    <scope>PHOSPHORYLATION [LARGE SCALE ANALYSIS] AT SER-64</scope>
    <scope>IDENTIFICATION BY MASS SPECTROMETRY [LARGE SCALE ANALYSIS]</scope>
    <source>
        <tissue>Liver</tissue>
    </source>
</reference>
<reference key="12">
    <citation type="submission" date="2010-11" db="PDB data bank">
        <title>Crystal structure of human NAD kinase.</title>
        <authorList>
            <consortium name="Structural genomics consortium (SGC)"/>
        </authorList>
    </citation>
    <scope>X-RAY CRYSTALLOGRAPHY (2.7 ANGSTROMS) OF 68-426</scope>
</reference>
<dbReference type="EC" id="2.7.1.23"/>
<dbReference type="EMBL" id="AY090771">
    <property type="protein sequence ID" value="AAM01195.1"/>
    <property type="molecule type" value="mRNA"/>
</dbReference>
<dbReference type="EMBL" id="AF250320">
    <property type="protein sequence ID" value="AAG44568.1"/>
    <property type="molecule type" value="mRNA"/>
</dbReference>
<dbReference type="EMBL" id="AK023114">
    <property type="protein sequence ID" value="BAB14412.1"/>
    <property type="molecule type" value="mRNA"/>
</dbReference>
<dbReference type="EMBL" id="AK290161">
    <property type="protein sequence ID" value="BAF82850.1"/>
    <property type="molecule type" value="mRNA"/>
</dbReference>
<dbReference type="EMBL" id="AK296722">
    <property type="protein sequence ID" value="BAH12420.1"/>
    <property type="molecule type" value="mRNA"/>
</dbReference>
<dbReference type="EMBL" id="AL031282">
    <property type="status" value="NOT_ANNOTATED_CDS"/>
    <property type="molecule type" value="Genomic_DNA"/>
</dbReference>
<dbReference type="EMBL" id="CH471183">
    <property type="protein sequence ID" value="EAW56151.1"/>
    <property type="molecule type" value="Genomic_DNA"/>
</dbReference>
<dbReference type="EMBL" id="CH471183">
    <property type="protein sequence ID" value="EAW56152.1"/>
    <property type="molecule type" value="Genomic_DNA"/>
</dbReference>
<dbReference type="EMBL" id="BC001709">
    <property type="protein sequence ID" value="AAH01709.1"/>
    <property type="molecule type" value="mRNA"/>
</dbReference>
<dbReference type="CCDS" id="CCDS30565.1">
    <molecule id="O95544-1"/>
</dbReference>
<dbReference type="CCDS" id="CCDS55562.1">
    <molecule id="O95544-2"/>
</dbReference>
<dbReference type="RefSeq" id="NP_001185922.1">
    <molecule id="O95544-1"/>
    <property type="nucleotide sequence ID" value="NM_001198993.2"/>
</dbReference>
<dbReference type="RefSeq" id="NP_001185923.1">
    <molecule id="O95544-2"/>
    <property type="nucleotide sequence ID" value="NM_001198994.2"/>
</dbReference>
<dbReference type="RefSeq" id="NP_001185924.1">
    <property type="nucleotide sequence ID" value="NM_001198995.1"/>
</dbReference>
<dbReference type="RefSeq" id="NP_001340570.1">
    <molecule id="O95544-1"/>
    <property type="nucleotide sequence ID" value="NM_001353641.2"/>
</dbReference>
<dbReference type="RefSeq" id="NP_075394.3">
    <molecule id="O95544-1"/>
    <property type="nucleotide sequence ID" value="NM_023018.4"/>
</dbReference>
<dbReference type="RefSeq" id="XP_005244835.1">
    <property type="nucleotide sequence ID" value="XM_005244778.2"/>
</dbReference>
<dbReference type="RefSeq" id="XP_006710900.1">
    <property type="nucleotide sequence ID" value="XM_006710837.2"/>
</dbReference>
<dbReference type="RefSeq" id="XP_047284587.1">
    <molecule id="O95544-1"/>
    <property type="nucleotide sequence ID" value="XM_047428631.1"/>
</dbReference>
<dbReference type="PDB" id="3PFN">
    <property type="method" value="X-ray"/>
    <property type="resolution" value="2.70 A"/>
    <property type="chains" value="A/B/C/D=68-426"/>
</dbReference>
<dbReference type="PDB" id="8KGC">
    <property type="method" value="EM"/>
    <property type="resolution" value="2.54 A"/>
    <property type="chains" value="A/B/C/D=1-446"/>
</dbReference>
<dbReference type="PDB" id="9CR3">
    <property type="method" value="EM"/>
    <property type="resolution" value="3.18 A"/>
    <property type="chains" value="A/B/C/D=1-446"/>
</dbReference>
<dbReference type="PDB" id="9CR4">
    <property type="method" value="EM"/>
    <property type="resolution" value="2.81 A"/>
    <property type="chains" value="A/B/C/D=91-437"/>
</dbReference>
<dbReference type="PDB" id="9CRA">
    <property type="method" value="EM"/>
    <property type="resolution" value="2.34 A"/>
    <property type="chains" value="A/B/C/D=91-437"/>
</dbReference>
<dbReference type="PDBsum" id="3PFN"/>
<dbReference type="PDBsum" id="8KGC"/>
<dbReference type="PDBsum" id="9CR3"/>
<dbReference type="PDBsum" id="9CR4"/>
<dbReference type="PDBsum" id="9CRA"/>
<dbReference type="EMDB" id="EMD-37217"/>
<dbReference type="EMDB" id="EMD-45831"/>
<dbReference type="EMDB" id="EMD-45832"/>
<dbReference type="EMDB" id="EMD-45856"/>
<dbReference type="SMR" id="O95544"/>
<dbReference type="BioGRID" id="122408">
    <property type="interactions" value="82"/>
</dbReference>
<dbReference type="FunCoup" id="O95544">
    <property type="interactions" value="783"/>
</dbReference>
<dbReference type="IntAct" id="O95544">
    <property type="interactions" value="19"/>
</dbReference>
<dbReference type="MINT" id="O95544"/>
<dbReference type="STRING" id="9606.ENSP00000367890"/>
<dbReference type="BindingDB" id="O95544"/>
<dbReference type="ChEMBL" id="CHEMBL6177"/>
<dbReference type="iPTMnet" id="O95544"/>
<dbReference type="MetOSite" id="O95544"/>
<dbReference type="PhosphoSitePlus" id="O95544"/>
<dbReference type="BioMuta" id="NADK"/>
<dbReference type="jPOST" id="O95544"/>
<dbReference type="MassIVE" id="O95544"/>
<dbReference type="PeptideAtlas" id="O95544"/>
<dbReference type="ProteomicsDB" id="24500"/>
<dbReference type="ProteomicsDB" id="50936">
    <molecule id="O95544-1"/>
</dbReference>
<dbReference type="ProteomicsDB" id="63692"/>
<dbReference type="Pumba" id="O95544"/>
<dbReference type="Antibodypedia" id="26587">
    <property type="antibodies" value="158 antibodies from 24 providers"/>
</dbReference>
<dbReference type="DNASU" id="65220"/>
<dbReference type="Ensembl" id="ENST00000341426.9">
    <molecule id="O95544-1"/>
    <property type="protein sequence ID" value="ENSP00000341679.5"/>
    <property type="gene ID" value="ENSG00000008130.15"/>
</dbReference>
<dbReference type="Ensembl" id="ENST00000341991.7">
    <molecule id="O95544-1"/>
    <property type="protein sequence ID" value="ENSP00000344340.3"/>
    <property type="gene ID" value="ENSG00000008130.15"/>
</dbReference>
<dbReference type="Ensembl" id="ENST00000378625.5">
    <molecule id="O95544-2"/>
    <property type="protein sequence ID" value="ENSP00000367890.1"/>
    <property type="gene ID" value="ENSG00000008130.15"/>
</dbReference>
<dbReference type="GeneID" id="65220"/>
<dbReference type="KEGG" id="hsa:65220"/>
<dbReference type="MANE-Select" id="ENST00000341426.9">
    <property type="protein sequence ID" value="ENSP00000341679.5"/>
    <property type="RefSeq nucleotide sequence ID" value="NM_023018.5"/>
    <property type="RefSeq protein sequence ID" value="NP_075394.3"/>
</dbReference>
<dbReference type="UCSC" id="uc001aic.3">
    <molecule id="O95544-1"/>
    <property type="organism name" value="human"/>
</dbReference>
<dbReference type="AGR" id="HGNC:29831"/>
<dbReference type="CTD" id="65220"/>
<dbReference type="DisGeNET" id="65220"/>
<dbReference type="GeneCards" id="NADK"/>
<dbReference type="HGNC" id="HGNC:29831">
    <property type="gene designation" value="NADK"/>
</dbReference>
<dbReference type="HPA" id="ENSG00000008130">
    <property type="expression patterns" value="Low tissue specificity"/>
</dbReference>
<dbReference type="MIM" id="611616">
    <property type="type" value="gene"/>
</dbReference>
<dbReference type="neXtProt" id="NX_O95544"/>
<dbReference type="OpenTargets" id="ENSG00000008130"/>
<dbReference type="PharmGKB" id="PA142671298"/>
<dbReference type="VEuPathDB" id="HostDB:ENSG00000008130"/>
<dbReference type="eggNOG" id="KOG2178">
    <property type="taxonomic scope" value="Eukaryota"/>
</dbReference>
<dbReference type="GeneTree" id="ENSGT00390000013792"/>
<dbReference type="HOGENOM" id="CLU_008831_10_3_1"/>
<dbReference type="InParanoid" id="O95544"/>
<dbReference type="OrthoDB" id="24581at2759"/>
<dbReference type="PAN-GO" id="O95544">
    <property type="GO annotations" value="2 GO annotations based on evolutionary models"/>
</dbReference>
<dbReference type="PhylomeDB" id="O95544"/>
<dbReference type="TreeFam" id="TF324076"/>
<dbReference type="BioCyc" id="MetaCyc:HS00233-MONOMER"/>
<dbReference type="BRENDA" id="2.7.1.23">
    <property type="organism ID" value="2681"/>
</dbReference>
<dbReference type="PathwayCommons" id="O95544"/>
<dbReference type="Reactome" id="R-HSA-196807">
    <property type="pathway name" value="Nicotinate metabolism"/>
</dbReference>
<dbReference type="SABIO-RK" id="O95544"/>
<dbReference type="SignaLink" id="O95544"/>
<dbReference type="BioGRID-ORCS" id="65220">
    <property type="hits" value="35 hits in 1168 CRISPR screens"/>
</dbReference>
<dbReference type="ChiTaRS" id="NADK">
    <property type="organism name" value="human"/>
</dbReference>
<dbReference type="EvolutionaryTrace" id="O95544"/>
<dbReference type="GeneWiki" id="NAD%2B_kinase"/>
<dbReference type="GenomeRNAi" id="65220"/>
<dbReference type="Pharos" id="O95544">
    <property type="development level" value="Tbio"/>
</dbReference>
<dbReference type="PRO" id="PR:O95544"/>
<dbReference type="Proteomes" id="UP000005640">
    <property type="component" value="Chromosome 1"/>
</dbReference>
<dbReference type="RNAct" id="O95544">
    <property type="molecule type" value="protein"/>
</dbReference>
<dbReference type="Bgee" id="ENSG00000008130">
    <property type="expression patterns" value="Expressed in blood and 202 other cell types or tissues"/>
</dbReference>
<dbReference type="ExpressionAtlas" id="O95544">
    <property type="expression patterns" value="baseline and differential"/>
</dbReference>
<dbReference type="GO" id="GO:0005829">
    <property type="term" value="C:cytosol"/>
    <property type="evidence" value="ECO:0000304"/>
    <property type="project" value="UniProtKB"/>
</dbReference>
<dbReference type="GO" id="GO:0005524">
    <property type="term" value="F:ATP binding"/>
    <property type="evidence" value="ECO:0007669"/>
    <property type="project" value="UniProtKB-KW"/>
</dbReference>
<dbReference type="GO" id="GO:0046872">
    <property type="term" value="F:metal ion binding"/>
    <property type="evidence" value="ECO:0007669"/>
    <property type="project" value="UniProtKB-KW"/>
</dbReference>
<dbReference type="GO" id="GO:0003951">
    <property type="term" value="F:NAD+ kinase activity"/>
    <property type="evidence" value="ECO:0000314"/>
    <property type="project" value="UniProtKB"/>
</dbReference>
<dbReference type="GO" id="GO:0046034">
    <property type="term" value="P:ATP metabolic process"/>
    <property type="evidence" value="ECO:0000303"/>
    <property type="project" value="UniProtKB"/>
</dbReference>
<dbReference type="GO" id="GO:0019674">
    <property type="term" value="P:NAD metabolic process"/>
    <property type="evidence" value="ECO:0007669"/>
    <property type="project" value="InterPro"/>
</dbReference>
<dbReference type="GO" id="GO:0006741">
    <property type="term" value="P:NADP biosynthetic process"/>
    <property type="evidence" value="ECO:0000318"/>
    <property type="project" value="GO_Central"/>
</dbReference>
<dbReference type="GO" id="GO:0016310">
    <property type="term" value="P:phosphorylation"/>
    <property type="evidence" value="ECO:0000303"/>
    <property type="project" value="UniProtKB"/>
</dbReference>
<dbReference type="GO" id="GO:0035774">
    <property type="term" value="P:positive regulation of insulin secretion involved in cellular response to glucose stimulus"/>
    <property type="evidence" value="ECO:0007669"/>
    <property type="project" value="Ensembl"/>
</dbReference>
<dbReference type="FunFam" id="3.40.50.10330:FF:000014">
    <property type="entry name" value="NAD kinase a"/>
    <property type="match status" value="1"/>
</dbReference>
<dbReference type="FunFam" id="2.60.200.30:FF:000003">
    <property type="entry name" value="NAD kinase b"/>
    <property type="match status" value="1"/>
</dbReference>
<dbReference type="Gene3D" id="3.40.50.10330">
    <property type="entry name" value="Probable inorganic polyphosphate/atp-NAD kinase, domain 1"/>
    <property type="match status" value="1"/>
</dbReference>
<dbReference type="Gene3D" id="2.60.200.30">
    <property type="entry name" value="Probable inorganic polyphosphate/atp-NAD kinase, domain 2"/>
    <property type="match status" value="1"/>
</dbReference>
<dbReference type="HAMAP" id="MF_00361">
    <property type="entry name" value="NAD_kinase"/>
    <property type="match status" value="1"/>
</dbReference>
<dbReference type="InterPro" id="IPR017438">
    <property type="entry name" value="ATP-NAD_kinase_N"/>
</dbReference>
<dbReference type="InterPro" id="IPR017437">
    <property type="entry name" value="ATP-NAD_kinase_PpnK-typ_C"/>
</dbReference>
<dbReference type="InterPro" id="IPR016064">
    <property type="entry name" value="NAD/diacylglycerol_kinase_sf"/>
</dbReference>
<dbReference type="InterPro" id="IPR002504">
    <property type="entry name" value="NADK"/>
</dbReference>
<dbReference type="PANTHER" id="PTHR20275">
    <property type="entry name" value="NAD KINASE"/>
    <property type="match status" value="1"/>
</dbReference>
<dbReference type="PANTHER" id="PTHR20275:SF0">
    <property type="entry name" value="NAD KINASE"/>
    <property type="match status" value="1"/>
</dbReference>
<dbReference type="Pfam" id="PF01513">
    <property type="entry name" value="NAD_kinase"/>
    <property type="match status" value="1"/>
</dbReference>
<dbReference type="Pfam" id="PF20143">
    <property type="entry name" value="NAD_kinase_C"/>
    <property type="match status" value="1"/>
</dbReference>
<dbReference type="SUPFAM" id="SSF111331">
    <property type="entry name" value="NAD kinase/diacylglycerol kinase-like"/>
    <property type="match status" value="1"/>
</dbReference>